<sequence>MKYTGSIFKRSRRLGFSLLENNKEFSKGKKRKTIPGQHGNRFRSSTMSGYAQQLQEKQRMQYMYGITDKQFRRLFRLVLKQRGNLAVNLFRVLESRLDNIVYRMGFAPTRRSARQLVNHGHVLLNDRTVDTPSIILNPGDKVRLKAKTIKIPIVKAASESGVVSPFVETNNKTFEGTYVRFPERSELPAGINESYVVEWYKRLVK</sequence>
<accession>P46775</accession>
<feature type="chain" id="PRO_0000132419" description="Small ribosomal subunit protein uS4">
    <location>
        <begin position="1"/>
        <end position="205"/>
    </location>
</feature>
<feature type="domain" description="S4 RNA-binding" evidence="1">
    <location>
        <begin position="95"/>
        <end position="156"/>
    </location>
</feature>
<feature type="helix" evidence="3">
    <location>
        <begin position="7"/>
        <end position="14"/>
    </location>
</feature>
<feature type="strand" evidence="3">
    <location>
        <begin position="18"/>
        <end position="20"/>
    </location>
</feature>
<feature type="helix" evidence="3">
    <location>
        <begin position="22"/>
        <end position="25"/>
    </location>
</feature>
<feature type="strand" evidence="3">
    <location>
        <begin position="35"/>
        <end position="37"/>
    </location>
</feature>
<feature type="helix" evidence="3">
    <location>
        <begin position="49"/>
        <end position="63"/>
    </location>
</feature>
<feature type="helix" evidence="3">
    <location>
        <begin position="68"/>
        <end position="79"/>
    </location>
</feature>
<feature type="strand" evidence="3">
    <location>
        <begin position="80"/>
        <end position="83"/>
    </location>
</feature>
<feature type="turn" evidence="3">
    <location>
        <begin position="86"/>
        <end position="88"/>
    </location>
</feature>
<feature type="helix" evidence="3">
    <location>
        <begin position="89"/>
        <end position="94"/>
    </location>
</feature>
<feature type="helix" evidence="3">
    <location>
        <begin position="97"/>
        <end position="104"/>
    </location>
</feature>
<feature type="strand" evidence="3">
    <location>
        <begin position="106"/>
        <end position="109"/>
    </location>
</feature>
<feature type="helix" evidence="3">
    <location>
        <begin position="110"/>
        <end position="119"/>
    </location>
</feature>
<feature type="strand" evidence="3">
    <location>
        <begin position="125"/>
        <end position="128"/>
    </location>
</feature>
<feature type="strand" evidence="3">
    <location>
        <begin position="149"/>
        <end position="153"/>
    </location>
</feature>
<feature type="helix" evidence="3">
    <location>
        <begin position="155"/>
        <end position="158"/>
    </location>
</feature>
<feature type="turn" evidence="3">
    <location>
        <begin position="184"/>
        <end position="186"/>
    </location>
</feature>
<feature type="helix" evidence="3">
    <location>
        <begin position="195"/>
        <end position="203"/>
    </location>
</feature>
<reference key="1">
    <citation type="journal article" date="1996" name="Gene">
        <title>Sequence analysis and characterization of the hmw gene cluster of Mycoplasma pneumoniae.</title>
        <authorList>
            <person name="Dirksen L.B."/>
            <person name="Proft T."/>
            <person name="Hilbert H."/>
            <person name="Plagens H."/>
            <person name="Herrmann R."/>
            <person name="Krause D.C."/>
        </authorList>
    </citation>
    <scope>NUCLEOTIDE SEQUENCE [GENOMIC DNA]</scope>
    <source>
        <strain>ATCC 29342 / M129 / Subtype 1</strain>
    </source>
</reference>
<reference key="2">
    <citation type="journal article" date="1996" name="Nucleic Acids Res.">
        <title>Complete sequence analysis of the genome of the bacterium Mycoplasma pneumoniae.</title>
        <authorList>
            <person name="Himmelreich R."/>
            <person name="Hilbert H."/>
            <person name="Plagens H."/>
            <person name="Pirkl E."/>
            <person name="Li B.-C."/>
            <person name="Herrmann R."/>
        </authorList>
    </citation>
    <scope>NUCLEOTIDE SEQUENCE [LARGE SCALE GENOMIC DNA]</scope>
    <source>
        <strain>ATCC 29342 / M129 / Subtype 1</strain>
    </source>
</reference>
<comment type="function">
    <text evidence="1">One of the primary rRNA binding proteins, it binds directly to 16S rRNA where it nucleates assembly of the body of the 30S subunit.</text>
</comment>
<comment type="function">
    <text evidence="1">With S5 and S12 plays an important role in translational accuracy.</text>
</comment>
<comment type="subunit">
    <text evidence="1">Part of the 30S ribosomal subunit. Contacts protein S5. The interaction surface between S4 and S5 is involved in control of translational fidelity.</text>
</comment>
<comment type="similarity">
    <text evidence="1">Belongs to the universal ribosomal protein uS4 family.</text>
</comment>
<evidence type="ECO:0000255" key="1">
    <source>
        <dbReference type="HAMAP-Rule" id="MF_01306"/>
    </source>
</evidence>
<evidence type="ECO:0000305" key="2"/>
<evidence type="ECO:0007829" key="3">
    <source>
        <dbReference type="PDB" id="8P6P"/>
    </source>
</evidence>
<protein>
    <recommendedName>
        <fullName evidence="1">Small ribosomal subunit protein uS4</fullName>
    </recommendedName>
    <alternativeName>
        <fullName evidence="2">30S ribosomal protein S4</fullName>
    </alternativeName>
</protein>
<keyword id="KW-0002">3D-structure</keyword>
<keyword id="KW-1185">Reference proteome</keyword>
<keyword id="KW-0687">Ribonucleoprotein</keyword>
<keyword id="KW-0689">Ribosomal protein</keyword>
<keyword id="KW-0694">RNA-binding</keyword>
<keyword id="KW-0699">rRNA-binding</keyword>
<dbReference type="EMBL" id="L38997">
    <property type="protein sequence ID" value="AAA61698.1"/>
    <property type="molecule type" value="Genomic_DNA"/>
</dbReference>
<dbReference type="EMBL" id="U00089">
    <property type="protein sequence ID" value="AAB96043.1"/>
    <property type="molecule type" value="Genomic_DNA"/>
</dbReference>
<dbReference type="PIR" id="S73721">
    <property type="entry name" value="S73721"/>
</dbReference>
<dbReference type="RefSeq" id="NP_110134.1">
    <property type="nucleotide sequence ID" value="NC_000912.1"/>
</dbReference>
<dbReference type="RefSeq" id="WP_010874802.1">
    <property type="nucleotide sequence ID" value="NZ_OU342337.1"/>
</dbReference>
<dbReference type="PDB" id="7OOC">
    <property type="method" value="EM"/>
    <property type="resolution" value="3.70 A"/>
    <property type="chains" value="C=1-205"/>
</dbReference>
<dbReference type="PDB" id="7P6Z">
    <property type="method" value="EM"/>
    <property type="resolution" value="3.50 A"/>
    <property type="chains" value="C=1-205"/>
</dbReference>
<dbReference type="PDB" id="7PAH">
    <property type="method" value="EM"/>
    <property type="resolution" value="9.50 A"/>
    <property type="chains" value="C=1-205"/>
</dbReference>
<dbReference type="PDB" id="7PAI">
    <property type="method" value="EM"/>
    <property type="resolution" value="6.70 A"/>
    <property type="chains" value="C=1-205"/>
</dbReference>
<dbReference type="PDB" id="7PAJ">
    <property type="method" value="EM"/>
    <property type="resolution" value="7.30 A"/>
    <property type="chains" value="C=1-205"/>
</dbReference>
<dbReference type="PDB" id="7PAK">
    <property type="method" value="EM"/>
    <property type="resolution" value="5.30 A"/>
    <property type="chains" value="C=1-205"/>
</dbReference>
<dbReference type="PDB" id="7PAL">
    <property type="method" value="EM"/>
    <property type="resolution" value="4.70 A"/>
    <property type="chains" value="C=1-205"/>
</dbReference>
<dbReference type="PDB" id="7PAM">
    <property type="method" value="EM"/>
    <property type="resolution" value="6.80 A"/>
    <property type="chains" value="C=1-205"/>
</dbReference>
<dbReference type="PDB" id="7PAN">
    <property type="method" value="EM"/>
    <property type="resolution" value="9.70 A"/>
    <property type="chains" value="C=1-205"/>
</dbReference>
<dbReference type="PDB" id="7PAO">
    <property type="method" value="EM"/>
    <property type="resolution" value="7.00 A"/>
    <property type="chains" value="C=1-205"/>
</dbReference>
<dbReference type="PDB" id="7PAQ">
    <property type="method" value="EM"/>
    <property type="resolution" value="8.90 A"/>
    <property type="chains" value="C=1-205"/>
</dbReference>
<dbReference type="PDB" id="7PAR">
    <property type="method" value="EM"/>
    <property type="resolution" value="8.20 A"/>
    <property type="chains" value="C=1-205"/>
</dbReference>
<dbReference type="PDB" id="7PAS">
    <property type="method" value="EM"/>
    <property type="resolution" value="16.00 A"/>
    <property type="chains" value="C=1-205"/>
</dbReference>
<dbReference type="PDB" id="7PH9">
    <property type="method" value="EM"/>
    <property type="resolution" value="8.70 A"/>
    <property type="chains" value="C=1-205"/>
</dbReference>
<dbReference type="PDB" id="7PHA">
    <property type="method" value="EM"/>
    <property type="resolution" value="8.50 A"/>
    <property type="chains" value="C=1-205"/>
</dbReference>
<dbReference type="PDB" id="7PHB">
    <property type="method" value="EM"/>
    <property type="resolution" value="4.90 A"/>
    <property type="chains" value="C=1-205"/>
</dbReference>
<dbReference type="PDB" id="7PHC">
    <property type="method" value="EM"/>
    <property type="resolution" value="9.90 A"/>
    <property type="chains" value="C=1-205"/>
</dbReference>
<dbReference type="PDB" id="7PI8">
    <property type="method" value="EM"/>
    <property type="resolution" value="8.90 A"/>
    <property type="chains" value="C=1-205"/>
</dbReference>
<dbReference type="PDB" id="7PI9">
    <property type="method" value="EM"/>
    <property type="resolution" value="6.30 A"/>
    <property type="chains" value="C=1-205"/>
</dbReference>
<dbReference type="PDB" id="7PIA">
    <property type="method" value="EM"/>
    <property type="resolution" value="13.60 A"/>
    <property type="chains" value="C=1-205"/>
</dbReference>
<dbReference type="PDB" id="7PIB">
    <property type="method" value="EM"/>
    <property type="resolution" value="4.70 A"/>
    <property type="chains" value="C=1-205"/>
</dbReference>
<dbReference type="PDB" id="7PIC">
    <property type="method" value="EM"/>
    <property type="resolution" value="9.10 A"/>
    <property type="chains" value="C=1-205"/>
</dbReference>
<dbReference type="PDB" id="7PIO">
    <property type="method" value="EM"/>
    <property type="resolution" value="9.50 A"/>
    <property type="chains" value="C=1-205"/>
</dbReference>
<dbReference type="PDB" id="7PIP">
    <property type="method" value="EM"/>
    <property type="resolution" value="9.30 A"/>
    <property type="chains" value="C=1-205"/>
</dbReference>
<dbReference type="PDB" id="7PIQ">
    <property type="method" value="EM"/>
    <property type="resolution" value="9.70 A"/>
    <property type="chains" value="C=1-205"/>
</dbReference>
<dbReference type="PDB" id="7PIR">
    <property type="method" value="EM"/>
    <property type="resolution" value="12.10 A"/>
    <property type="chains" value="C=1-205"/>
</dbReference>
<dbReference type="PDB" id="7PIS">
    <property type="method" value="EM"/>
    <property type="resolution" value="15.00 A"/>
    <property type="chains" value="C=1-205"/>
</dbReference>
<dbReference type="PDB" id="7PIT">
    <property type="method" value="EM"/>
    <property type="resolution" value="5.70 A"/>
    <property type="chains" value="C=1-205"/>
</dbReference>
<dbReference type="PDB" id="8P6P">
    <property type="method" value="EM"/>
    <property type="resolution" value="3.20 A"/>
    <property type="chains" value="C=1-205"/>
</dbReference>
<dbReference type="PDB" id="8P7X">
    <property type="method" value="EM"/>
    <property type="resolution" value="3.03 A"/>
    <property type="chains" value="C=1-205"/>
</dbReference>
<dbReference type="PDB" id="8P7Y">
    <property type="method" value="EM"/>
    <property type="resolution" value="3.70 A"/>
    <property type="chains" value="C/U=1-205"/>
</dbReference>
<dbReference type="PDB" id="8P8V">
    <property type="method" value="EM"/>
    <property type="resolution" value="8.70 A"/>
    <property type="chains" value="C=1-205"/>
</dbReference>
<dbReference type="PDB" id="8P8W">
    <property type="method" value="EM"/>
    <property type="resolution" value="8.70 A"/>
    <property type="chains" value="C/U=1-205"/>
</dbReference>
<dbReference type="PDBsum" id="7OOC"/>
<dbReference type="PDBsum" id="7P6Z"/>
<dbReference type="PDBsum" id="7PAH"/>
<dbReference type="PDBsum" id="7PAI"/>
<dbReference type="PDBsum" id="7PAJ"/>
<dbReference type="PDBsum" id="7PAK"/>
<dbReference type="PDBsum" id="7PAL"/>
<dbReference type="PDBsum" id="7PAM"/>
<dbReference type="PDBsum" id="7PAN"/>
<dbReference type="PDBsum" id="7PAO"/>
<dbReference type="PDBsum" id="7PAQ"/>
<dbReference type="PDBsum" id="7PAR"/>
<dbReference type="PDBsum" id="7PAS"/>
<dbReference type="PDBsum" id="7PH9"/>
<dbReference type="PDBsum" id="7PHA"/>
<dbReference type="PDBsum" id="7PHB"/>
<dbReference type="PDBsum" id="7PHC"/>
<dbReference type="PDBsum" id="7PI8"/>
<dbReference type="PDBsum" id="7PI9"/>
<dbReference type="PDBsum" id="7PIA"/>
<dbReference type="PDBsum" id="7PIB"/>
<dbReference type="PDBsum" id="7PIC"/>
<dbReference type="PDBsum" id="7PIO"/>
<dbReference type="PDBsum" id="7PIP"/>
<dbReference type="PDBsum" id="7PIQ"/>
<dbReference type="PDBsum" id="7PIR"/>
<dbReference type="PDBsum" id="7PIS"/>
<dbReference type="PDBsum" id="7PIT"/>
<dbReference type="PDBsum" id="8P6P"/>
<dbReference type="PDBsum" id="8P7X"/>
<dbReference type="PDBsum" id="8P7Y"/>
<dbReference type="PDBsum" id="8P8V"/>
<dbReference type="PDBsum" id="8P8W"/>
<dbReference type="EMDB" id="EMD-13234"/>
<dbReference type="EMDB" id="EMD-13272"/>
<dbReference type="EMDB" id="EMD-13273"/>
<dbReference type="EMDB" id="EMD-13274"/>
<dbReference type="EMDB" id="EMD-13275"/>
<dbReference type="EMDB" id="EMD-13276"/>
<dbReference type="EMDB" id="EMD-13277"/>
<dbReference type="EMDB" id="EMD-13278"/>
<dbReference type="EMDB" id="EMD-13279"/>
<dbReference type="EMDB" id="EMD-13280"/>
<dbReference type="EMDB" id="EMD-13281"/>
<dbReference type="EMDB" id="EMD-13282"/>
<dbReference type="EMDB" id="EMD-13410"/>
<dbReference type="EMDB" id="EMD-13411"/>
<dbReference type="EMDB" id="EMD-13412"/>
<dbReference type="EMDB" id="EMD-13413"/>
<dbReference type="EMDB" id="EMD-13432"/>
<dbReference type="EMDB" id="EMD-13433"/>
<dbReference type="EMDB" id="EMD-13434"/>
<dbReference type="EMDB" id="EMD-13435"/>
<dbReference type="EMDB" id="EMD-13436"/>
<dbReference type="EMDB" id="EMD-13445"/>
<dbReference type="EMDB" id="EMD-13446"/>
<dbReference type="EMDB" id="EMD-13447"/>
<dbReference type="EMDB" id="EMD-13448"/>
<dbReference type="EMDB" id="EMD-13449"/>
<dbReference type="EMDB" id="EMD-13450"/>
<dbReference type="SMR" id="P46775"/>
<dbReference type="IntAct" id="P46775">
    <property type="interactions" value="4"/>
</dbReference>
<dbReference type="STRING" id="272634.MPN_446"/>
<dbReference type="EnsemblBacteria" id="AAB96043">
    <property type="protein sequence ID" value="AAB96043"/>
    <property type="gene ID" value="MPN_446"/>
</dbReference>
<dbReference type="GeneID" id="66608889"/>
<dbReference type="KEGG" id="mpn:MPN_446"/>
<dbReference type="PATRIC" id="fig|272634.6.peg.482"/>
<dbReference type="HOGENOM" id="CLU_092403_0_1_14"/>
<dbReference type="OrthoDB" id="9803672at2"/>
<dbReference type="BioCyc" id="MPNE272634:G1GJ3-719-MONOMER"/>
<dbReference type="Proteomes" id="UP000000808">
    <property type="component" value="Chromosome"/>
</dbReference>
<dbReference type="GO" id="GO:0015935">
    <property type="term" value="C:small ribosomal subunit"/>
    <property type="evidence" value="ECO:0007669"/>
    <property type="project" value="InterPro"/>
</dbReference>
<dbReference type="GO" id="GO:0019843">
    <property type="term" value="F:rRNA binding"/>
    <property type="evidence" value="ECO:0007669"/>
    <property type="project" value="UniProtKB-UniRule"/>
</dbReference>
<dbReference type="GO" id="GO:0003735">
    <property type="term" value="F:structural constituent of ribosome"/>
    <property type="evidence" value="ECO:0007669"/>
    <property type="project" value="InterPro"/>
</dbReference>
<dbReference type="GO" id="GO:0042274">
    <property type="term" value="P:ribosomal small subunit biogenesis"/>
    <property type="evidence" value="ECO:0007669"/>
    <property type="project" value="TreeGrafter"/>
</dbReference>
<dbReference type="GO" id="GO:0006412">
    <property type="term" value="P:translation"/>
    <property type="evidence" value="ECO:0007669"/>
    <property type="project" value="UniProtKB-UniRule"/>
</dbReference>
<dbReference type="CDD" id="cd00165">
    <property type="entry name" value="S4"/>
    <property type="match status" value="1"/>
</dbReference>
<dbReference type="FunFam" id="3.10.290.10:FF:000001">
    <property type="entry name" value="30S ribosomal protein S4"/>
    <property type="match status" value="1"/>
</dbReference>
<dbReference type="Gene3D" id="1.10.1050.10">
    <property type="entry name" value="Ribosomal Protein S4 Delta 41, Chain A, domain 1"/>
    <property type="match status" value="1"/>
</dbReference>
<dbReference type="Gene3D" id="3.10.290.10">
    <property type="entry name" value="RNA-binding S4 domain"/>
    <property type="match status" value="1"/>
</dbReference>
<dbReference type="HAMAP" id="MF_01306_B">
    <property type="entry name" value="Ribosomal_uS4_B"/>
    <property type="match status" value="1"/>
</dbReference>
<dbReference type="InterPro" id="IPR022801">
    <property type="entry name" value="Ribosomal_uS4"/>
</dbReference>
<dbReference type="InterPro" id="IPR005709">
    <property type="entry name" value="Ribosomal_uS4_bac-type"/>
</dbReference>
<dbReference type="InterPro" id="IPR018079">
    <property type="entry name" value="Ribosomal_uS4_CS"/>
</dbReference>
<dbReference type="InterPro" id="IPR001912">
    <property type="entry name" value="Ribosomal_uS4_N"/>
</dbReference>
<dbReference type="InterPro" id="IPR002942">
    <property type="entry name" value="S4_RNA-bd"/>
</dbReference>
<dbReference type="InterPro" id="IPR036986">
    <property type="entry name" value="S4_RNA-bd_sf"/>
</dbReference>
<dbReference type="NCBIfam" id="NF003717">
    <property type="entry name" value="PRK05327.1"/>
    <property type="match status" value="1"/>
</dbReference>
<dbReference type="NCBIfam" id="TIGR01017">
    <property type="entry name" value="rpsD_bact"/>
    <property type="match status" value="1"/>
</dbReference>
<dbReference type="PANTHER" id="PTHR11831">
    <property type="entry name" value="30S 40S RIBOSOMAL PROTEIN"/>
    <property type="match status" value="1"/>
</dbReference>
<dbReference type="PANTHER" id="PTHR11831:SF4">
    <property type="entry name" value="SMALL RIBOSOMAL SUBUNIT PROTEIN US4M"/>
    <property type="match status" value="1"/>
</dbReference>
<dbReference type="Pfam" id="PF00163">
    <property type="entry name" value="Ribosomal_S4"/>
    <property type="match status" value="1"/>
</dbReference>
<dbReference type="Pfam" id="PF01479">
    <property type="entry name" value="S4"/>
    <property type="match status" value="1"/>
</dbReference>
<dbReference type="SMART" id="SM01390">
    <property type="entry name" value="Ribosomal_S4"/>
    <property type="match status" value="1"/>
</dbReference>
<dbReference type="SMART" id="SM00363">
    <property type="entry name" value="S4"/>
    <property type="match status" value="1"/>
</dbReference>
<dbReference type="SUPFAM" id="SSF55174">
    <property type="entry name" value="Alpha-L RNA-binding motif"/>
    <property type="match status" value="1"/>
</dbReference>
<dbReference type="PROSITE" id="PS00632">
    <property type="entry name" value="RIBOSOMAL_S4"/>
    <property type="match status" value="1"/>
</dbReference>
<dbReference type="PROSITE" id="PS50889">
    <property type="entry name" value="S4"/>
    <property type="match status" value="1"/>
</dbReference>
<gene>
    <name evidence="1" type="primary">rpsD</name>
    <name evidence="1" type="synonym">rps4</name>
    <name type="ordered locus">MPN_446</name>
    <name type="ORF">MP395</name>
</gene>
<organism>
    <name type="scientific">Mycoplasma pneumoniae (strain ATCC 29342 / M129 / Subtype 1)</name>
    <name type="common">Mycoplasmoides pneumoniae</name>
    <dbReference type="NCBI Taxonomy" id="272634"/>
    <lineage>
        <taxon>Bacteria</taxon>
        <taxon>Bacillati</taxon>
        <taxon>Mycoplasmatota</taxon>
        <taxon>Mycoplasmoidales</taxon>
        <taxon>Mycoplasmoidaceae</taxon>
        <taxon>Mycoplasmoides</taxon>
    </lineage>
</organism>
<name>RS4_MYCPN</name>
<proteinExistence type="evidence at protein level"/>